<keyword id="KW-0378">Hydrolase</keyword>
<keyword id="KW-1185">Reference proteome</keyword>
<feature type="chain" id="PRO_1000191841" description="RNA pyrophosphohydrolase">
    <location>
        <begin position="1"/>
        <end position="229"/>
    </location>
</feature>
<feature type="domain" description="Nudix hydrolase" evidence="1">
    <location>
        <begin position="6"/>
        <end position="149"/>
    </location>
</feature>
<feature type="region of interest" description="Disordered" evidence="2">
    <location>
        <begin position="191"/>
        <end position="229"/>
    </location>
</feature>
<feature type="short sequence motif" description="Nudix box">
    <location>
        <begin position="38"/>
        <end position="59"/>
    </location>
</feature>
<feature type="compositionally biased region" description="Pro residues" evidence="2">
    <location>
        <begin position="220"/>
        <end position="229"/>
    </location>
</feature>
<reference key="1">
    <citation type="submission" date="2009-01" db="EMBL/GenBank/DDBJ databases">
        <title>Complete sequence of Diaphorobacter sp. TPSY.</title>
        <authorList>
            <consortium name="US DOE Joint Genome Institute"/>
            <person name="Lucas S."/>
            <person name="Copeland A."/>
            <person name="Lapidus A."/>
            <person name="Glavina del Rio T."/>
            <person name="Tice H."/>
            <person name="Bruce D."/>
            <person name="Goodwin L."/>
            <person name="Pitluck S."/>
            <person name="Chertkov O."/>
            <person name="Brettin T."/>
            <person name="Detter J.C."/>
            <person name="Han C."/>
            <person name="Larimer F."/>
            <person name="Land M."/>
            <person name="Hauser L."/>
            <person name="Kyrpides N."/>
            <person name="Mikhailova N."/>
            <person name="Coates J.D."/>
        </authorList>
    </citation>
    <scope>NUCLEOTIDE SEQUENCE [LARGE SCALE GENOMIC DNA]</scope>
    <source>
        <strain>TPSY</strain>
    </source>
</reference>
<organism>
    <name type="scientific">Acidovorax ebreus (strain TPSY)</name>
    <name type="common">Diaphorobacter sp. (strain TPSY)</name>
    <dbReference type="NCBI Taxonomy" id="535289"/>
    <lineage>
        <taxon>Bacteria</taxon>
        <taxon>Pseudomonadati</taxon>
        <taxon>Pseudomonadota</taxon>
        <taxon>Betaproteobacteria</taxon>
        <taxon>Burkholderiales</taxon>
        <taxon>Comamonadaceae</taxon>
        <taxon>Diaphorobacter</taxon>
    </lineage>
</organism>
<name>RPPH_ACIET</name>
<gene>
    <name evidence="1" type="primary">rppH</name>
    <name evidence="1" type="synonym">nudH</name>
    <name type="ordered locus">Dtpsy_0774</name>
</gene>
<sequence length="229" mass="26821">MLDRDGFRPNVGIILLNQRNQVFWGKRIRTHSWQFPQGGIDRGETPEQAMFRELHEEVGLLPPQVRVIARTRDWLRYEVPDRFIRRDARGHYKGQKQIWYLLQLLGHDWDLNLRATNHPEFDAWRWNDYWVPLDVVVEFKRGVYEMALTELARFLPRHEQRNRYLRSGMRTREHESSGQASLARTSSLLVKPGMELPPGASFDPDPQNSVPAPLEALPTLPVPKKPLDA</sequence>
<comment type="function">
    <text evidence="1">Accelerates the degradation of transcripts by removing pyrophosphate from the 5'-end of triphosphorylated RNA, leading to a more labile monophosphorylated state that can stimulate subsequent ribonuclease cleavage.</text>
</comment>
<comment type="cofactor">
    <cofactor evidence="1">
        <name>a divalent metal cation</name>
        <dbReference type="ChEBI" id="CHEBI:60240"/>
    </cofactor>
</comment>
<comment type="similarity">
    <text evidence="1">Belongs to the Nudix hydrolase family. RppH subfamily.</text>
</comment>
<evidence type="ECO:0000255" key="1">
    <source>
        <dbReference type="HAMAP-Rule" id="MF_00298"/>
    </source>
</evidence>
<evidence type="ECO:0000256" key="2">
    <source>
        <dbReference type="SAM" id="MobiDB-lite"/>
    </source>
</evidence>
<accession>B9MDZ9</accession>
<dbReference type="EC" id="3.6.1.-" evidence="1"/>
<dbReference type="EMBL" id="CP001392">
    <property type="protein sequence ID" value="ACM32253.1"/>
    <property type="molecule type" value="Genomic_DNA"/>
</dbReference>
<dbReference type="RefSeq" id="WP_012655756.1">
    <property type="nucleotide sequence ID" value="NC_011992.1"/>
</dbReference>
<dbReference type="SMR" id="B9MDZ9"/>
<dbReference type="KEGG" id="dia:Dtpsy_0774"/>
<dbReference type="eggNOG" id="COG0494">
    <property type="taxonomic scope" value="Bacteria"/>
</dbReference>
<dbReference type="HOGENOM" id="CLU_087195_1_1_4"/>
<dbReference type="Proteomes" id="UP000000450">
    <property type="component" value="Chromosome"/>
</dbReference>
<dbReference type="GO" id="GO:0016462">
    <property type="term" value="F:pyrophosphatase activity"/>
    <property type="evidence" value="ECO:0007669"/>
    <property type="project" value="UniProtKB-ARBA"/>
</dbReference>
<dbReference type="CDD" id="cd03671">
    <property type="entry name" value="NUDIX_Ap4A_hydrolase_plant_like"/>
    <property type="match status" value="1"/>
</dbReference>
<dbReference type="Gene3D" id="3.90.79.10">
    <property type="entry name" value="Nucleoside Triphosphate Pyrophosphohydrolase"/>
    <property type="match status" value="1"/>
</dbReference>
<dbReference type="HAMAP" id="MF_00298">
    <property type="entry name" value="Nudix_RppH"/>
    <property type="match status" value="1"/>
</dbReference>
<dbReference type="InterPro" id="IPR020476">
    <property type="entry name" value="Nudix_hydrolase"/>
</dbReference>
<dbReference type="InterPro" id="IPR015797">
    <property type="entry name" value="NUDIX_hydrolase-like_dom_sf"/>
</dbReference>
<dbReference type="InterPro" id="IPR020084">
    <property type="entry name" value="NUDIX_hydrolase_CS"/>
</dbReference>
<dbReference type="InterPro" id="IPR000086">
    <property type="entry name" value="NUDIX_hydrolase_dom"/>
</dbReference>
<dbReference type="InterPro" id="IPR022927">
    <property type="entry name" value="RppH"/>
</dbReference>
<dbReference type="NCBIfam" id="NF001935">
    <property type="entry name" value="PRK00714.1-2"/>
    <property type="match status" value="1"/>
</dbReference>
<dbReference type="NCBIfam" id="NF001937">
    <property type="entry name" value="PRK00714.1-4"/>
    <property type="match status" value="1"/>
</dbReference>
<dbReference type="NCBIfam" id="NF001938">
    <property type="entry name" value="PRK00714.1-5"/>
    <property type="match status" value="1"/>
</dbReference>
<dbReference type="PANTHER" id="PTHR43736">
    <property type="entry name" value="ADP-RIBOSE PYROPHOSPHATASE"/>
    <property type="match status" value="1"/>
</dbReference>
<dbReference type="PANTHER" id="PTHR43736:SF1">
    <property type="entry name" value="DIHYDRONEOPTERIN TRIPHOSPHATE DIPHOSPHATASE"/>
    <property type="match status" value="1"/>
</dbReference>
<dbReference type="Pfam" id="PF00293">
    <property type="entry name" value="NUDIX"/>
    <property type="match status" value="1"/>
</dbReference>
<dbReference type="PRINTS" id="PR00502">
    <property type="entry name" value="NUDIXFAMILY"/>
</dbReference>
<dbReference type="SUPFAM" id="SSF55811">
    <property type="entry name" value="Nudix"/>
    <property type="match status" value="1"/>
</dbReference>
<dbReference type="PROSITE" id="PS51462">
    <property type="entry name" value="NUDIX"/>
    <property type="match status" value="1"/>
</dbReference>
<dbReference type="PROSITE" id="PS00893">
    <property type="entry name" value="NUDIX_BOX"/>
    <property type="match status" value="1"/>
</dbReference>
<protein>
    <recommendedName>
        <fullName evidence="1">RNA pyrophosphohydrolase</fullName>
        <ecNumber evidence="1">3.6.1.-</ecNumber>
    </recommendedName>
    <alternativeName>
        <fullName evidence="1">(Di)nucleoside polyphosphate hydrolase</fullName>
    </alternativeName>
</protein>
<proteinExistence type="inferred from homology"/>